<name>LIPS_MOUSE</name>
<reference key="1">
    <citation type="journal article" date="1994" name="Genomics">
        <title>Isolation and characterization of the gene for mouse hormone-sensitive lipase.</title>
        <authorList>
            <person name="Li Z."/>
            <person name="Sumida M."/>
            <person name="Birchbauer A."/>
            <person name="Schotz M.C."/>
            <person name="Reue K."/>
        </authorList>
    </citation>
    <scope>NUCLEOTIDE SEQUENCE [MRNA] (ISOFORM 1)</scope>
</reference>
<reference key="2">
    <citation type="journal article" date="1997" name="Mamm. Genome">
        <title>Hormone-sensitive lipase (Lipe): sequence analysis of the 129Sv mouse Lipe gene.</title>
        <authorList>
            <person name="Sztrolovics R."/>
            <person name="Wang S.P."/>
            <person name="Lapierre P."/>
            <person name="Chen H.S."/>
            <person name="Robert M.-F."/>
            <person name="Mitchell G.A."/>
        </authorList>
    </citation>
    <scope>NUCLEOTIDE SEQUENCE [GENOMIC DNA]</scope>
    <source>
        <strain>129/Sv</strain>
    </source>
</reference>
<reference key="3">
    <citation type="journal article" date="2005" name="Science">
        <title>The transcriptional landscape of the mammalian genome.</title>
        <authorList>
            <person name="Carninci P."/>
            <person name="Kasukawa T."/>
            <person name="Katayama S."/>
            <person name="Gough J."/>
            <person name="Frith M.C."/>
            <person name="Maeda N."/>
            <person name="Oyama R."/>
            <person name="Ravasi T."/>
            <person name="Lenhard B."/>
            <person name="Wells C."/>
            <person name="Kodzius R."/>
            <person name="Shimokawa K."/>
            <person name="Bajic V.B."/>
            <person name="Brenner S.E."/>
            <person name="Batalov S."/>
            <person name="Forrest A.R."/>
            <person name="Zavolan M."/>
            <person name="Davis M.J."/>
            <person name="Wilming L.G."/>
            <person name="Aidinis V."/>
            <person name="Allen J.E."/>
            <person name="Ambesi-Impiombato A."/>
            <person name="Apweiler R."/>
            <person name="Aturaliya R.N."/>
            <person name="Bailey T.L."/>
            <person name="Bansal M."/>
            <person name="Baxter L."/>
            <person name="Beisel K.W."/>
            <person name="Bersano T."/>
            <person name="Bono H."/>
            <person name="Chalk A.M."/>
            <person name="Chiu K.P."/>
            <person name="Choudhary V."/>
            <person name="Christoffels A."/>
            <person name="Clutterbuck D.R."/>
            <person name="Crowe M.L."/>
            <person name="Dalla E."/>
            <person name="Dalrymple B.P."/>
            <person name="de Bono B."/>
            <person name="Della Gatta G."/>
            <person name="di Bernardo D."/>
            <person name="Down T."/>
            <person name="Engstrom P."/>
            <person name="Fagiolini M."/>
            <person name="Faulkner G."/>
            <person name="Fletcher C.F."/>
            <person name="Fukushima T."/>
            <person name="Furuno M."/>
            <person name="Futaki S."/>
            <person name="Gariboldi M."/>
            <person name="Georgii-Hemming P."/>
            <person name="Gingeras T.R."/>
            <person name="Gojobori T."/>
            <person name="Green R.E."/>
            <person name="Gustincich S."/>
            <person name="Harbers M."/>
            <person name="Hayashi Y."/>
            <person name="Hensch T.K."/>
            <person name="Hirokawa N."/>
            <person name="Hill D."/>
            <person name="Huminiecki L."/>
            <person name="Iacono M."/>
            <person name="Ikeo K."/>
            <person name="Iwama A."/>
            <person name="Ishikawa T."/>
            <person name="Jakt M."/>
            <person name="Kanapin A."/>
            <person name="Katoh M."/>
            <person name="Kawasawa Y."/>
            <person name="Kelso J."/>
            <person name="Kitamura H."/>
            <person name="Kitano H."/>
            <person name="Kollias G."/>
            <person name="Krishnan S.P."/>
            <person name="Kruger A."/>
            <person name="Kummerfeld S.K."/>
            <person name="Kurochkin I.V."/>
            <person name="Lareau L.F."/>
            <person name="Lazarevic D."/>
            <person name="Lipovich L."/>
            <person name="Liu J."/>
            <person name="Liuni S."/>
            <person name="McWilliam S."/>
            <person name="Madan Babu M."/>
            <person name="Madera M."/>
            <person name="Marchionni L."/>
            <person name="Matsuda H."/>
            <person name="Matsuzawa S."/>
            <person name="Miki H."/>
            <person name="Mignone F."/>
            <person name="Miyake S."/>
            <person name="Morris K."/>
            <person name="Mottagui-Tabar S."/>
            <person name="Mulder N."/>
            <person name="Nakano N."/>
            <person name="Nakauchi H."/>
            <person name="Ng P."/>
            <person name="Nilsson R."/>
            <person name="Nishiguchi S."/>
            <person name="Nishikawa S."/>
            <person name="Nori F."/>
            <person name="Ohara O."/>
            <person name="Okazaki Y."/>
            <person name="Orlando V."/>
            <person name="Pang K.C."/>
            <person name="Pavan W.J."/>
            <person name="Pavesi G."/>
            <person name="Pesole G."/>
            <person name="Petrovsky N."/>
            <person name="Piazza S."/>
            <person name="Reed J."/>
            <person name="Reid J.F."/>
            <person name="Ring B.Z."/>
            <person name="Ringwald M."/>
            <person name="Rost B."/>
            <person name="Ruan Y."/>
            <person name="Salzberg S.L."/>
            <person name="Sandelin A."/>
            <person name="Schneider C."/>
            <person name="Schoenbach C."/>
            <person name="Sekiguchi K."/>
            <person name="Semple C.A."/>
            <person name="Seno S."/>
            <person name="Sessa L."/>
            <person name="Sheng Y."/>
            <person name="Shibata Y."/>
            <person name="Shimada H."/>
            <person name="Shimada K."/>
            <person name="Silva D."/>
            <person name="Sinclair B."/>
            <person name="Sperling S."/>
            <person name="Stupka E."/>
            <person name="Sugiura K."/>
            <person name="Sultana R."/>
            <person name="Takenaka Y."/>
            <person name="Taki K."/>
            <person name="Tammoja K."/>
            <person name="Tan S.L."/>
            <person name="Tang S."/>
            <person name="Taylor M.S."/>
            <person name="Tegner J."/>
            <person name="Teichmann S.A."/>
            <person name="Ueda H.R."/>
            <person name="van Nimwegen E."/>
            <person name="Verardo R."/>
            <person name="Wei C.L."/>
            <person name="Yagi K."/>
            <person name="Yamanishi H."/>
            <person name="Zabarovsky E."/>
            <person name="Zhu S."/>
            <person name="Zimmer A."/>
            <person name="Hide W."/>
            <person name="Bult C."/>
            <person name="Grimmond S.M."/>
            <person name="Teasdale R.D."/>
            <person name="Liu E.T."/>
            <person name="Brusic V."/>
            <person name="Quackenbush J."/>
            <person name="Wahlestedt C."/>
            <person name="Mattick J.S."/>
            <person name="Hume D.A."/>
            <person name="Kai C."/>
            <person name="Sasaki D."/>
            <person name="Tomaru Y."/>
            <person name="Fukuda S."/>
            <person name="Kanamori-Katayama M."/>
            <person name="Suzuki M."/>
            <person name="Aoki J."/>
            <person name="Arakawa T."/>
            <person name="Iida J."/>
            <person name="Imamura K."/>
            <person name="Itoh M."/>
            <person name="Kato T."/>
            <person name="Kawaji H."/>
            <person name="Kawagashira N."/>
            <person name="Kawashima T."/>
            <person name="Kojima M."/>
            <person name="Kondo S."/>
            <person name="Konno H."/>
            <person name="Nakano K."/>
            <person name="Ninomiya N."/>
            <person name="Nishio T."/>
            <person name="Okada M."/>
            <person name="Plessy C."/>
            <person name="Shibata K."/>
            <person name="Shiraki T."/>
            <person name="Suzuki S."/>
            <person name="Tagami M."/>
            <person name="Waki K."/>
            <person name="Watahiki A."/>
            <person name="Okamura-Oho Y."/>
            <person name="Suzuki H."/>
            <person name="Kawai J."/>
            <person name="Hayashizaki Y."/>
        </authorList>
    </citation>
    <scope>NUCLEOTIDE SEQUENCE [LARGE SCALE MRNA] (ISOFORMS 1 AND 2)</scope>
    <source>
        <strain>C57BL/6J</strain>
        <tissue>Testis</tissue>
    </source>
</reference>
<reference key="4">
    <citation type="journal article" date="2009" name="PLoS Biol.">
        <title>Lineage-specific biology revealed by a finished genome assembly of the mouse.</title>
        <authorList>
            <person name="Church D.M."/>
            <person name="Goodstadt L."/>
            <person name="Hillier L.W."/>
            <person name="Zody M.C."/>
            <person name="Goldstein S."/>
            <person name="She X."/>
            <person name="Bult C.J."/>
            <person name="Agarwala R."/>
            <person name="Cherry J.L."/>
            <person name="DiCuccio M."/>
            <person name="Hlavina W."/>
            <person name="Kapustin Y."/>
            <person name="Meric P."/>
            <person name="Maglott D."/>
            <person name="Birtle Z."/>
            <person name="Marques A.C."/>
            <person name="Graves T."/>
            <person name="Zhou S."/>
            <person name="Teague B."/>
            <person name="Potamousis K."/>
            <person name="Churas C."/>
            <person name="Place M."/>
            <person name="Herschleb J."/>
            <person name="Runnheim R."/>
            <person name="Forrest D."/>
            <person name="Amos-Landgraf J."/>
            <person name="Schwartz D.C."/>
            <person name="Cheng Z."/>
            <person name="Lindblad-Toh K."/>
            <person name="Eichler E.E."/>
            <person name="Ponting C.P."/>
        </authorList>
    </citation>
    <scope>NUCLEOTIDE SEQUENCE [LARGE SCALE GENOMIC DNA]</scope>
    <source>
        <strain>C57BL/6J</strain>
    </source>
</reference>
<reference key="5">
    <citation type="journal article" date="2004" name="Genome Res.">
        <title>The status, quality, and expansion of the NIH full-length cDNA project: the Mammalian Gene Collection (MGC).</title>
        <authorList>
            <consortium name="The MGC Project Team"/>
        </authorList>
    </citation>
    <scope>NUCLEOTIDE SEQUENCE [LARGE SCALE MRNA] (ISOFORM 1)</scope>
    <source>
        <strain>FVB/N</strain>
        <tissue>Salivary gland</tissue>
    </source>
</reference>
<reference key="6">
    <citation type="journal article" date="2004" name="Science">
        <title>Fat mobilization in adipose tissue is promoted by adipose triglyceride lipase.</title>
        <authorList>
            <person name="Zimmermann R."/>
            <person name="Strauss J.G."/>
            <person name="Haemmerle G."/>
            <person name="Schoiswohl G."/>
            <person name="Birner-Gruenberger R."/>
            <person name="Riederer M."/>
            <person name="Lass A."/>
            <person name="Neuberger G."/>
            <person name="Eisenhaber F."/>
            <person name="Hermetter A."/>
            <person name="Zechner R."/>
        </authorList>
    </citation>
    <scope>FUNCTION</scope>
    <scope>CATALYTIC ACTIVITY</scope>
    <scope>SUBCELLULAR LOCATION</scope>
</reference>
<reference key="7">
    <citation type="journal article" date="2005" name="J. Biol. Chem.">
        <title>Anti-lipolytic action of AMP-activated protein kinase in rodent adipocytes.</title>
        <authorList>
            <person name="Daval M."/>
            <person name="Diot-Dupuy F."/>
            <person name="Bazin R."/>
            <person name="Hainault I."/>
            <person name="Viollet B."/>
            <person name="Vaulont S."/>
            <person name="Hajduch E."/>
            <person name="Ferre P."/>
            <person name="Foufelle F."/>
        </authorList>
    </citation>
    <scope>PHOSPHORYLATION BY AMPK</scope>
    <scope>SUBCELLULAR LOCATION</scope>
</reference>
<reference key="8">
    <citation type="journal article" date="2007" name="Proc. Natl. Acad. Sci. U.S.A.">
        <title>Large-scale phosphorylation analysis of mouse liver.</title>
        <authorList>
            <person name="Villen J."/>
            <person name="Beausoleil S.A."/>
            <person name="Gerber S.A."/>
            <person name="Gygi S.P."/>
        </authorList>
    </citation>
    <scope>IDENTIFICATION BY MASS SPECTROMETRY [LARGE SCALE ANALYSIS]</scope>
    <source>
        <tissue>Liver</tissue>
    </source>
</reference>
<reference key="9">
    <citation type="journal article" date="2009" name="J. Biol. Chem.">
        <title>Activation of hormone-sensitive lipase requires two steps, protein phosphorylation and binding to the PAT-1 domain of lipid droplet coat proteins.</title>
        <authorList>
            <person name="Wang H."/>
            <person name="Hu L."/>
            <person name="Dalen K."/>
            <person name="Dorward H."/>
            <person name="Marcinkiewicz A."/>
            <person name="Russell D."/>
            <person name="Gong D."/>
            <person name="Londos C."/>
            <person name="Yamaguchi T."/>
            <person name="Holm C."/>
            <person name="Rizzo M.A."/>
            <person name="Brasaemle D."/>
            <person name="Sztalryd C."/>
        </authorList>
    </citation>
    <scope>INTERACTION WITH PLIN5</scope>
</reference>
<reference key="10">
    <citation type="journal article" date="2009" name="Proteomics">
        <title>The stoichiometry of protein phosphorylation in adipocyte lipid droplets: analysis by N-terminal isotope tagging and enzymatic dephosphorylation.</title>
        <authorList>
            <person name="Kanshin E."/>
            <person name="Wang S."/>
            <person name="Ashmarina L."/>
            <person name="Fedjaev M."/>
            <person name="Nifant'ev I."/>
            <person name="Mitchell G.A."/>
            <person name="Pshezhetsky A.V."/>
        </authorList>
    </citation>
    <scope>PHOSPHORYLATION AT SER-559</scope>
</reference>
<reference key="11">
    <citation type="journal article" date="2010" name="Cell">
        <title>A tissue-specific atlas of mouse protein phosphorylation and expression.</title>
        <authorList>
            <person name="Huttlin E.L."/>
            <person name="Jedrychowski M.P."/>
            <person name="Elias J.E."/>
            <person name="Goswami T."/>
            <person name="Rad R."/>
            <person name="Beausoleil S.A."/>
            <person name="Villen J."/>
            <person name="Haas W."/>
            <person name="Sowa M.E."/>
            <person name="Gygi S.P."/>
        </authorList>
    </citation>
    <scope>PHOSPHORYLATION [LARGE SCALE ANALYSIS] AT SER-559; THR-574 AND SER-651</scope>
    <scope>IDENTIFICATION BY MASS SPECTROMETRY [LARGE SCALE ANALYSIS]</scope>
    <source>
        <tissue>Brain</tissue>
        <tissue>Brown adipose tissue</tissue>
        <tissue>Heart</tissue>
        <tissue>Kidney</tissue>
        <tissue>Lung</tissue>
        <tissue>Pancreas</tissue>
        <tissue>Spleen</tissue>
        <tissue>Testis</tissue>
    </source>
</reference>
<reference key="12">
    <citation type="journal article" date="2010" name="J. Lipid Res.">
        <title>Cholesteryl ester hydrolase activity is abolished in HSL-/- macrophages but unchanged in macrophages lacking KIAA1363.</title>
        <authorList>
            <person name="Buchebner M."/>
            <person name="Pfeifer T."/>
            <person name="Rathke N."/>
            <person name="Chandak P.G."/>
            <person name="Lass A."/>
            <person name="Schreiber R."/>
            <person name="Kratzer A."/>
            <person name="Zimmermann R."/>
            <person name="Sattler W."/>
            <person name="Koefeler H."/>
            <person name="Froehlich E."/>
            <person name="Kostner G.M."/>
            <person name="Birner-Gruenberger R."/>
            <person name="Chiang K.P."/>
            <person name="Haemmerle G."/>
            <person name="Zechner R."/>
            <person name="Levak-Frank S."/>
            <person name="Cravatt B."/>
            <person name="Kratky D."/>
        </authorList>
    </citation>
    <scope>FUNCTION</scope>
    <scope>CATALYTIC ACTIVITY</scope>
</reference>
<reference key="13">
    <citation type="journal article" date="2011" name="J. Biol. Chem.">
        <title>Monoglyceride lipase deficiency in mice impairs lipolysis and attenuates diet-induced insulin resistance.</title>
        <authorList>
            <person name="Taschler U."/>
            <person name="Radner F.P."/>
            <person name="Heier C."/>
            <person name="Schreiber R."/>
            <person name="Schweiger M."/>
            <person name="Schoiswohl G."/>
            <person name="Preiss-Landl K."/>
            <person name="Jaeger D."/>
            <person name="Reiter B."/>
            <person name="Koefeler H.C."/>
            <person name="Wojciechowski J."/>
            <person name="Theussl C."/>
            <person name="Penninger J.M."/>
            <person name="Lass A."/>
            <person name="Haemmerle G."/>
            <person name="Zechner R."/>
            <person name="Zimmermann R."/>
        </authorList>
    </citation>
    <scope>FUNCTION</scope>
    <scope>CATALYTIC ACTIVITY</scope>
    <scope>BIOPHYSICOCHEMICAL PROPERTIES</scope>
</reference>
<reference key="14">
    <citation type="journal article" date="2012" name="J. Biol. Chem.">
        <title>Studies on the substrate and stereo/regioselectivity of adipose triglyceride lipase, hormone-sensitive lipase, and diacylglycerol-O-acyltransferases.</title>
        <authorList>
            <person name="Eichmann T.O."/>
            <person name="Kumari M."/>
            <person name="Haas J.T."/>
            <person name="Farese R.V. Jr."/>
            <person name="Zimmermann R."/>
            <person name="Lass A."/>
            <person name="Zechner R."/>
        </authorList>
    </citation>
    <scope>FUNCTION</scope>
    <scope>CATALYTIC ACTIVITY</scope>
    <scope>DISRUPTION PHENOTYPE</scope>
</reference>
<reference key="15">
    <citation type="journal article" date="2013" name="Nat. Med.">
        <title>Ablation of TRIP-Br2, a regulator of fat lipolysis, thermogenesis and oxidative metabolism, prevents diet-induced obesity and insulin resistance.</title>
        <authorList>
            <person name="Liew C.W."/>
            <person name="Boucher J."/>
            <person name="Cheong J.K."/>
            <person name="Vernochet C."/>
            <person name="Koh H.J."/>
            <person name="Mallol C."/>
            <person name="Townsend K."/>
            <person name="Langin D."/>
            <person name="Kawamori D."/>
            <person name="Hu J."/>
            <person name="Tseng Y.H."/>
            <person name="Hellerstein M.K."/>
            <person name="Farmer S.R."/>
            <person name="Goodyear L."/>
            <person name="Doria A."/>
            <person name="Blueher M."/>
            <person name="Hsu S.I."/>
            <person name="Kulkarni R.N."/>
        </authorList>
    </citation>
    <scope>FUNCTION AS LIPOLYTIC ENZYME</scope>
</reference>
<gene>
    <name type="primary">Lipe</name>
</gene>
<protein>
    <recommendedName>
        <fullName>Hormone-sensitive lipase</fullName>
        <shortName>HSL</shortName>
        <ecNumber evidence="8 12 14">3.1.1.79</ecNumber>
    </recommendedName>
    <alternativeName>
        <fullName>Monoacylglycerol lipase LIPE</fullName>
        <ecNumber evidence="13">3.1.1.23</ecNumber>
    </alternativeName>
    <alternativeName>
        <fullName evidence="16">Retinyl ester hydrolase</fullName>
        <shortName>REH</shortName>
    </alternativeName>
</protein>
<sequence length="759" mass="83348">MDLRTMTQSLVTLAEDNMAFFSSQGPGETARRLSNVFAGVREQALGLEPTLGQLLGVAHHFDLDTETPANGYRSLVHTARCCLAHLLHKSRYVASNRKSIFFRASHNLAELEAYLAALTQLRAMAYYAQRLLTINRPGVLFFEGDEGLTADFLQEYVTLHKGCFYGRCLGFQFTPAIRPFLQTLSIGLVSFGEHYKRNETGLSVTASSLFTGGRFAIDPELRGAEFERIIQNLDVHFWKAFWNITEIEVLSSLANMASTTVRVSRLLSLPPEAFEMPLTSDPRLTVTISPPLAHTGPAPVLARLISYDLREGQDSKVLNSLAKSEGPRLELRPRPHQAPRSRALVVHIHGGGFVAQTSKSHEPYLKNWAQELGVPIFSIDYSLAPEAPFPRALEECFFAYCWAVKHCDLLGSTGERICLAGDSAGGNLCITVSLRAAAYGVRVPDGIMAAYPVTTLQSSASPSRLLSLMDPLLPLSVLSKCVSAYSGTEAEDHFDSDQKALGVMGLVQRDTSLFLRDLRLGASSWLNSFLELSGRKPQKTTSPTAESVRPTESMRRSVSEAALAQPEGLLGTDTLKKLTIKDLSNSEPSDSPEMSQSMETLGPSTPSDVNFFLRPGNSQEEAEAKDEVRPMDGVPRVRAAFPEGFHPRRSSQGVLHMPLYTSPIVKNPFMSPLLAPDSMLKTLPPVHLVACALDPMLDDSVMFARRLRDLGQPVTLKVVEDLPHGFLSLAALCRETRQATEFCVQRIRLILTPPAAPLN</sequence>
<proteinExistence type="evidence at protein level"/>
<evidence type="ECO:0000250" key="1">
    <source>
        <dbReference type="UniProtKB" id="P15304"/>
    </source>
</evidence>
<evidence type="ECO:0000250" key="2">
    <source>
        <dbReference type="UniProtKB" id="P16386"/>
    </source>
</evidence>
<evidence type="ECO:0000250" key="3">
    <source>
        <dbReference type="UniProtKB" id="Q05469"/>
    </source>
</evidence>
<evidence type="ECO:0000250" key="4">
    <source>
        <dbReference type="UniProtKB" id="Q5NUF3"/>
    </source>
</evidence>
<evidence type="ECO:0000250" key="5">
    <source>
        <dbReference type="UniProtKB" id="Q8BLF1"/>
    </source>
</evidence>
<evidence type="ECO:0000255" key="6">
    <source>
        <dbReference type="PROSITE-ProRule" id="PRU10038"/>
    </source>
</evidence>
<evidence type="ECO:0000256" key="7">
    <source>
        <dbReference type="SAM" id="MobiDB-lite"/>
    </source>
</evidence>
<evidence type="ECO:0000269" key="8">
    <source>
    </source>
</evidence>
<evidence type="ECO:0000269" key="9">
    <source>
    </source>
</evidence>
<evidence type="ECO:0000269" key="10">
    <source>
    </source>
</evidence>
<evidence type="ECO:0000269" key="11">
    <source>
    </source>
</evidence>
<evidence type="ECO:0000269" key="12">
    <source>
    </source>
</evidence>
<evidence type="ECO:0000269" key="13">
    <source>
    </source>
</evidence>
<evidence type="ECO:0000269" key="14">
    <source>
    </source>
</evidence>
<evidence type="ECO:0000269" key="15">
    <source>
    </source>
</evidence>
<evidence type="ECO:0000303" key="16">
    <source>
    </source>
</evidence>
<evidence type="ECO:0000303" key="17">
    <source>
    </source>
</evidence>
<evidence type="ECO:0000305" key="18"/>
<evidence type="ECO:0000305" key="19">
    <source>
    </source>
</evidence>
<evidence type="ECO:0000305" key="20">
    <source>
    </source>
</evidence>
<evidence type="ECO:0000305" key="21">
    <source>
    </source>
</evidence>
<evidence type="ECO:0000305" key="22">
    <source>
    </source>
</evidence>
<evidence type="ECO:0000305" key="23">
    <source>
    </source>
</evidence>
<evidence type="ECO:0007744" key="24">
    <source>
    </source>
</evidence>
<keyword id="KW-0025">Alternative splicing</keyword>
<keyword id="KW-1003">Cell membrane</keyword>
<keyword id="KW-0153">Cholesterol metabolism</keyword>
<keyword id="KW-0963">Cytoplasm</keyword>
<keyword id="KW-0378">Hydrolase</keyword>
<keyword id="KW-0442">Lipid degradation</keyword>
<keyword id="KW-0551">Lipid droplet</keyword>
<keyword id="KW-0443">Lipid metabolism</keyword>
<keyword id="KW-0472">Membrane</keyword>
<keyword id="KW-0597">Phosphoprotein</keyword>
<keyword id="KW-1185">Reference proteome</keyword>
<keyword id="KW-0753">Steroid metabolism</keyword>
<keyword id="KW-1207">Sterol metabolism</keyword>
<dbReference type="EC" id="3.1.1.79" evidence="8 12 14"/>
<dbReference type="EC" id="3.1.1.23" evidence="13"/>
<dbReference type="EMBL" id="U08188">
    <property type="protein sequence ID" value="AAC52163.1"/>
    <property type="molecule type" value="mRNA"/>
</dbReference>
<dbReference type="EMBL" id="AF179427">
    <property type="protein sequence ID" value="AAC53069.1"/>
    <property type="molecule type" value="Genomic_DNA"/>
</dbReference>
<dbReference type="EMBL" id="AC162443">
    <property type="status" value="NOT_ANNOTATED_CDS"/>
    <property type="molecule type" value="Genomic_DNA"/>
</dbReference>
<dbReference type="EMBL" id="AC169209">
    <property type="status" value="NOT_ANNOTATED_CDS"/>
    <property type="molecule type" value="Genomic_DNA"/>
</dbReference>
<dbReference type="EMBL" id="AK029984">
    <property type="protein sequence ID" value="BAC26716.1"/>
    <property type="molecule type" value="mRNA"/>
</dbReference>
<dbReference type="EMBL" id="AK169858">
    <property type="protein sequence ID" value="BAE41414.1"/>
    <property type="molecule type" value="mRNA"/>
</dbReference>
<dbReference type="EMBL" id="BC021642">
    <property type="protein sequence ID" value="AAH21642.1"/>
    <property type="molecule type" value="mRNA"/>
</dbReference>
<dbReference type="CCDS" id="CCDS20981.1">
    <molecule id="P54310-2"/>
</dbReference>
<dbReference type="CCDS" id="CCDS20982.1">
    <molecule id="P54310-1"/>
</dbReference>
<dbReference type="PIR" id="I49007">
    <property type="entry name" value="I49007"/>
</dbReference>
<dbReference type="RefSeq" id="NP_001034596.1">
    <molecule id="P54310-1"/>
    <property type="nucleotide sequence ID" value="NM_001039507.2"/>
</dbReference>
<dbReference type="RefSeq" id="NP_034849.2">
    <molecule id="P54310-2"/>
    <property type="nucleotide sequence ID" value="NM_010719.5"/>
</dbReference>
<dbReference type="RefSeq" id="XP_006539634.1">
    <property type="nucleotide sequence ID" value="XM_006539571.2"/>
</dbReference>
<dbReference type="RefSeq" id="XP_006539635.1">
    <molecule id="P54310-1"/>
    <property type="nucleotide sequence ID" value="XM_006539572.4"/>
</dbReference>
<dbReference type="RefSeq" id="XP_030098038.1">
    <molecule id="P54310-1"/>
    <property type="nucleotide sequence ID" value="XM_030242178.1"/>
</dbReference>
<dbReference type="RefSeq" id="XP_030098040.1">
    <molecule id="P54310-1"/>
    <property type="nucleotide sequence ID" value="XM_030242180.1"/>
</dbReference>
<dbReference type="BioGRID" id="201169">
    <property type="interactions" value="1"/>
</dbReference>
<dbReference type="FunCoup" id="P54310">
    <property type="interactions" value="753"/>
</dbReference>
<dbReference type="STRING" id="10090.ENSMUSP00000003207"/>
<dbReference type="ChEMBL" id="CHEMBL5935"/>
<dbReference type="SwissLipids" id="SLP:000000313"/>
<dbReference type="SwissLipids" id="SLP:000000314"/>
<dbReference type="ESTHER" id="mouse-hslip">
    <property type="family name" value="Hormone-sensitive_lipase_like"/>
</dbReference>
<dbReference type="MEROPS" id="S09.993"/>
<dbReference type="GlyGen" id="P54310">
    <property type="glycosylation" value="1 site, 1 N-linked glycan (1 site)"/>
</dbReference>
<dbReference type="iPTMnet" id="P54310"/>
<dbReference type="PhosphoSitePlus" id="P54310"/>
<dbReference type="jPOST" id="P54310"/>
<dbReference type="PaxDb" id="10090-ENSMUSP00000003207"/>
<dbReference type="PeptideAtlas" id="P54310"/>
<dbReference type="ProteomicsDB" id="292097">
    <molecule id="P54310-1"/>
</dbReference>
<dbReference type="ProteomicsDB" id="292098">
    <molecule id="P54310-2"/>
</dbReference>
<dbReference type="Pumba" id="P54310"/>
<dbReference type="Antibodypedia" id="4327">
    <property type="antibodies" value="474 antibodies from 38 providers"/>
</dbReference>
<dbReference type="DNASU" id="16890"/>
<dbReference type="Ensembl" id="ENSMUST00000003207.11">
    <molecule id="P54310-2"/>
    <property type="protein sequence ID" value="ENSMUSP00000003207.5"/>
    <property type="gene ID" value="ENSMUSG00000003123.16"/>
</dbReference>
<dbReference type="Ensembl" id="ENSMUST00000054301.14">
    <molecule id="P54310-1"/>
    <property type="protein sequence ID" value="ENSMUSP00000050935.8"/>
    <property type="gene ID" value="ENSMUSG00000003123.16"/>
</dbReference>
<dbReference type="Ensembl" id="ENSMUST00000206861.2">
    <molecule id="P54310-1"/>
    <property type="protein sequence ID" value="ENSMUSP00000145665.2"/>
    <property type="gene ID" value="ENSMUSG00000003123.16"/>
</dbReference>
<dbReference type="GeneID" id="16890"/>
<dbReference type="KEGG" id="mmu:16890"/>
<dbReference type="UCSC" id="uc009fsp.1">
    <molecule id="P54310-1"/>
    <property type="organism name" value="mouse"/>
</dbReference>
<dbReference type="UCSC" id="uc009fsr.1">
    <molecule id="P54310-2"/>
    <property type="organism name" value="mouse"/>
</dbReference>
<dbReference type="AGR" id="MGI:96790"/>
<dbReference type="CTD" id="3991"/>
<dbReference type="MGI" id="MGI:96790">
    <property type="gene designation" value="Lipe"/>
</dbReference>
<dbReference type="VEuPathDB" id="HostDB:ENSMUSG00000003123"/>
<dbReference type="eggNOG" id="KOG4388">
    <property type="taxonomic scope" value="Eukaryota"/>
</dbReference>
<dbReference type="GeneTree" id="ENSGT00730000111056"/>
<dbReference type="HOGENOM" id="CLU_010288_1_0_1"/>
<dbReference type="InParanoid" id="P54310"/>
<dbReference type="OMA" id="FAACQDH"/>
<dbReference type="OrthoDB" id="6413688at2759"/>
<dbReference type="TreeFam" id="TF314423"/>
<dbReference type="BRENDA" id="3.1.1.79">
    <property type="organism ID" value="3474"/>
</dbReference>
<dbReference type="UniPathway" id="UPA00256"/>
<dbReference type="BioGRID-ORCS" id="16890">
    <property type="hits" value="3 hits in 79 CRISPR screens"/>
</dbReference>
<dbReference type="ChiTaRS" id="Lipe">
    <property type="organism name" value="mouse"/>
</dbReference>
<dbReference type="PRO" id="PR:P54310"/>
<dbReference type="Proteomes" id="UP000000589">
    <property type="component" value="Chromosome 7"/>
</dbReference>
<dbReference type="RNAct" id="P54310">
    <property type="molecule type" value="protein"/>
</dbReference>
<dbReference type="Bgee" id="ENSMUSG00000003123">
    <property type="expression patterns" value="Expressed in brown adipose tissue and 143 other cell types or tissues"/>
</dbReference>
<dbReference type="ExpressionAtlas" id="P54310">
    <property type="expression patterns" value="baseline and differential"/>
</dbReference>
<dbReference type="GO" id="GO:0005901">
    <property type="term" value="C:caveola"/>
    <property type="evidence" value="ECO:0000250"/>
    <property type="project" value="UniProtKB"/>
</dbReference>
<dbReference type="GO" id="GO:0005737">
    <property type="term" value="C:cytoplasm"/>
    <property type="evidence" value="ECO:0000250"/>
    <property type="project" value="UniProtKB"/>
</dbReference>
<dbReference type="GO" id="GO:0005829">
    <property type="term" value="C:cytosol"/>
    <property type="evidence" value="ECO:0000314"/>
    <property type="project" value="UniProtKB"/>
</dbReference>
<dbReference type="GO" id="GO:0005811">
    <property type="term" value="C:lipid droplet"/>
    <property type="evidence" value="ECO:0000314"/>
    <property type="project" value="UniProtKB"/>
</dbReference>
<dbReference type="GO" id="GO:0016020">
    <property type="term" value="C:membrane"/>
    <property type="evidence" value="ECO:0000314"/>
    <property type="project" value="UniProtKB"/>
</dbReference>
<dbReference type="GO" id="GO:0005739">
    <property type="term" value="C:mitochondrion"/>
    <property type="evidence" value="ECO:0000250"/>
    <property type="project" value="UniProtKB"/>
</dbReference>
<dbReference type="GO" id="GO:0005634">
    <property type="term" value="C:nucleus"/>
    <property type="evidence" value="ECO:0000250"/>
    <property type="project" value="UniProtKB"/>
</dbReference>
<dbReference type="GO" id="GO:0047376">
    <property type="term" value="F:all-trans-retinyl-palmitate hydrolase, all-trans-retinol forming activity"/>
    <property type="evidence" value="ECO:0007669"/>
    <property type="project" value="RHEA"/>
</dbReference>
<dbReference type="GO" id="GO:0120516">
    <property type="term" value="F:diacylglycerol lipase activity"/>
    <property type="evidence" value="ECO:0000314"/>
    <property type="project" value="UniProtKB"/>
</dbReference>
<dbReference type="GO" id="GO:0047372">
    <property type="term" value="F:monoacylglycerol lipase activity"/>
    <property type="evidence" value="ECO:0000314"/>
    <property type="project" value="UniProtKB"/>
</dbReference>
<dbReference type="GO" id="GO:0019901">
    <property type="term" value="F:protein kinase binding"/>
    <property type="evidence" value="ECO:0000353"/>
    <property type="project" value="UniProtKB"/>
</dbReference>
<dbReference type="GO" id="GO:0050253">
    <property type="term" value="F:retinyl-palmitate esterase activity"/>
    <property type="evidence" value="ECO:0000314"/>
    <property type="project" value="UniProtKB"/>
</dbReference>
<dbReference type="GO" id="GO:0042134">
    <property type="term" value="F:rRNA primary transcript binding"/>
    <property type="evidence" value="ECO:0000250"/>
    <property type="project" value="UniProtKB"/>
</dbReference>
<dbReference type="GO" id="GO:0017171">
    <property type="term" value="F:serine hydrolase activity"/>
    <property type="evidence" value="ECO:0000314"/>
    <property type="project" value="MGI"/>
</dbReference>
<dbReference type="GO" id="GO:0004771">
    <property type="term" value="F:sterol ester esterase activity"/>
    <property type="evidence" value="ECO:0000314"/>
    <property type="project" value="UniProtKB"/>
</dbReference>
<dbReference type="GO" id="GO:0004806">
    <property type="term" value="F:triacylglycerol lipase activity"/>
    <property type="evidence" value="ECO:0000314"/>
    <property type="project" value="UniProtKB"/>
</dbReference>
<dbReference type="GO" id="GO:0070417">
    <property type="term" value="P:cellular response to cold"/>
    <property type="evidence" value="ECO:0000314"/>
    <property type="project" value="MGI"/>
</dbReference>
<dbReference type="GO" id="GO:0008203">
    <property type="term" value="P:cholesterol metabolic process"/>
    <property type="evidence" value="ECO:0007669"/>
    <property type="project" value="UniProtKB-KW"/>
</dbReference>
<dbReference type="GO" id="GO:0046340">
    <property type="term" value="P:diacylglycerol catabolic process"/>
    <property type="evidence" value="ECO:0000314"/>
    <property type="project" value="UniProtKB"/>
</dbReference>
<dbReference type="GO" id="GO:0046485">
    <property type="term" value="P:ether lipid metabolic process"/>
    <property type="evidence" value="ECO:0000314"/>
    <property type="project" value="UniProtKB"/>
</dbReference>
<dbReference type="GO" id="GO:0016042">
    <property type="term" value="P:lipid catabolic process"/>
    <property type="evidence" value="ECO:0000314"/>
    <property type="project" value="UniProtKB"/>
</dbReference>
<dbReference type="GO" id="GO:0042758">
    <property type="term" value="P:long-chain fatty acid catabolic process"/>
    <property type="evidence" value="ECO:0000314"/>
    <property type="project" value="MGI"/>
</dbReference>
<dbReference type="GO" id="GO:0006363">
    <property type="term" value="P:termination of RNA polymerase I transcription"/>
    <property type="evidence" value="ECO:0000250"/>
    <property type="project" value="UniProtKB"/>
</dbReference>
<dbReference type="GO" id="GO:0006361">
    <property type="term" value="P:transcription initiation at RNA polymerase I promoter"/>
    <property type="evidence" value="ECO:0000250"/>
    <property type="project" value="UniProtKB"/>
</dbReference>
<dbReference type="GO" id="GO:0019433">
    <property type="term" value="P:triglyceride catabolic process"/>
    <property type="evidence" value="ECO:0000314"/>
    <property type="project" value="MGI"/>
</dbReference>
<dbReference type="FunFam" id="3.40.50.1820:FF:000110">
    <property type="entry name" value="Hormone-sensitive lipase"/>
    <property type="match status" value="1"/>
</dbReference>
<dbReference type="FunFam" id="3.40.50.1820:FF:000199">
    <property type="entry name" value="Hormone-sensitive lipase"/>
    <property type="match status" value="1"/>
</dbReference>
<dbReference type="Gene3D" id="3.40.50.1820">
    <property type="entry name" value="alpha/beta hydrolase"/>
    <property type="match status" value="2"/>
</dbReference>
<dbReference type="InterPro" id="IPR013094">
    <property type="entry name" value="AB_hydrolase_3"/>
</dbReference>
<dbReference type="InterPro" id="IPR029058">
    <property type="entry name" value="AB_hydrolase_fold"/>
</dbReference>
<dbReference type="InterPro" id="IPR010468">
    <property type="entry name" value="HSL_N"/>
</dbReference>
<dbReference type="InterPro" id="IPR002168">
    <property type="entry name" value="Lipase_GDXG_HIS_AS"/>
</dbReference>
<dbReference type="InterPro" id="IPR033140">
    <property type="entry name" value="Lipase_GDXG_put_SER_AS"/>
</dbReference>
<dbReference type="PANTHER" id="PTHR23025:SF3">
    <property type="entry name" value="HORMONE-SENSITIVE LIPASE"/>
    <property type="match status" value="1"/>
</dbReference>
<dbReference type="PANTHER" id="PTHR23025">
    <property type="entry name" value="TRIACYLGLYCEROL LIPASE"/>
    <property type="match status" value="1"/>
</dbReference>
<dbReference type="Pfam" id="PF07859">
    <property type="entry name" value="Abhydrolase_3"/>
    <property type="match status" value="2"/>
</dbReference>
<dbReference type="Pfam" id="PF06350">
    <property type="entry name" value="HSL_N"/>
    <property type="match status" value="1"/>
</dbReference>
<dbReference type="SUPFAM" id="SSF53474">
    <property type="entry name" value="alpha/beta-Hydrolases"/>
    <property type="match status" value="1"/>
</dbReference>
<dbReference type="PROSITE" id="PS01173">
    <property type="entry name" value="LIPASE_GDXG_HIS"/>
    <property type="match status" value="1"/>
</dbReference>
<dbReference type="PROSITE" id="PS01174">
    <property type="entry name" value="LIPASE_GDXG_SER"/>
    <property type="match status" value="1"/>
</dbReference>
<comment type="function">
    <text evidence="1 3 8 12 13 14 15">Lipase with broad substrate specificity, catalyzing the hydrolysis of triacylglycerols (TAGs), diacylglycerols (DAGs), monoacylglycerols (MAGs), cholesteryl esters and retinyl esters (PubMed:15550674, PubMed:20625037, PubMed:21454566, PubMed:23066022, PubMed:23291629). Shows a preferential hydrolysis of DAGs over TAGs and MAGs and of the fatty acid (FA) esters at the sn-1 and sn-2 positions of the glycerol backbone in TAGs (By similarity). Preferentially hydrolyzes FA esters at the sn-3 position of the glycerol backbone in DAGs (PubMed:23066022). Catalyzes the hydrolysis of 2-arachidonoylglycerol, an endocannabinoid and of 2-acetyl monoalkylglycerol ether, the penultimate precursor of the pathway for de novo synthesis of platelet-activating factor (PubMed:20625037, PubMed:21454566). In adipose tissue and heart, it primarily hydrolyzes stored triglycerides to free fatty acids, while in steroidogenic tissues, it principally converts cholesteryl esters to free cholesterol for steroid hormone production (By similarity).</text>
</comment>
<comment type="catalytic activity">
    <reaction evidence="12 14">
        <text>a diacylglycerol + H2O = a monoacylglycerol + a fatty acid + H(+)</text>
        <dbReference type="Rhea" id="RHEA:32731"/>
        <dbReference type="ChEBI" id="CHEBI:15377"/>
        <dbReference type="ChEBI" id="CHEBI:15378"/>
        <dbReference type="ChEBI" id="CHEBI:17408"/>
        <dbReference type="ChEBI" id="CHEBI:18035"/>
        <dbReference type="ChEBI" id="CHEBI:28868"/>
        <dbReference type="EC" id="3.1.1.79"/>
    </reaction>
</comment>
<comment type="catalytic activity">
    <reaction evidence="8">
        <text>a triacylglycerol + H2O = a diacylglycerol + a fatty acid + H(+)</text>
        <dbReference type="Rhea" id="RHEA:12044"/>
        <dbReference type="ChEBI" id="CHEBI:15377"/>
        <dbReference type="ChEBI" id="CHEBI:15378"/>
        <dbReference type="ChEBI" id="CHEBI:17855"/>
        <dbReference type="ChEBI" id="CHEBI:18035"/>
        <dbReference type="ChEBI" id="CHEBI:28868"/>
        <dbReference type="EC" id="3.1.1.79"/>
    </reaction>
</comment>
<comment type="catalytic activity">
    <reaction evidence="13">
        <text>a monoacylglycerol + H2O = glycerol + a fatty acid + H(+)</text>
        <dbReference type="Rhea" id="RHEA:15245"/>
        <dbReference type="ChEBI" id="CHEBI:15377"/>
        <dbReference type="ChEBI" id="CHEBI:15378"/>
        <dbReference type="ChEBI" id="CHEBI:17408"/>
        <dbReference type="ChEBI" id="CHEBI:17754"/>
        <dbReference type="ChEBI" id="CHEBI:28868"/>
        <dbReference type="EC" id="3.1.1.79"/>
    </reaction>
</comment>
<comment type="catalytic activity">
    <reaction evidence="13">
        <text>Hydrolyzes glycerol monoesters of long-chain fatty acids.</text>
        <dbReference type="EC" id="3.1.1.23"/>
    </reaction>
</comment>
<comment type="catalytic activity">
    <reaction evidence="8 12">
        <text>cholesteryl (9Z-octadecenoate) + H2O = cholesterol + (9Z)-octadecenoate + H(+)</text>
        <dbReference type="Rhea" id="RHEA:33875"/>
        <dbReference type="ChEBI" id="CHEBI:15377"/>
        <dbReference type="ChEBI" id="CHEBI:15378"/>
        <dbReference type="ChEBI" id="CHEBI:16113"/>
        <dbReference type="ChEBI" id="CHEBI:30823"/>
        <dbReference type="ChEBI" id="CHEBI:46898"/>
    </reaction>
    <physiologicalReaction direction="left-to-right" evidence="19">
        <dbReference type="Rhea" id="RHEA:33876"/>
    </physiologicalReaction>
</comment>
<comment type="catalytic activity">
    <reaction evidence="8">
        <text>all-trans-retinyl hexadecanoate + H2O = all-trans-retinol + hexadecanoate + H(+)</text>
        <dbReference type="Rhea" id="RHEA:13933"/>
        <dbReference type="ChEBI" id="CHEBI:7896"/>
        <dbReference type="ChEBI" id="CHEBI:15377"/>
        <dbReference type="ChEBI" id="CHEBI:15378"/>
        <dbReference type="ChEBI" id="CHEBI:17336"/>
        <dbReference type="ChEBI" id="CHEBI:17616"/>
    </reaction>
    <physiologicalReaction direction="left-to-right" evidence="19">
        <dbReference type="Rhea" id="RHEA:13934"/>
    </physiologicalReaction>
</comment>
<comment type="catalytic activity">
    <reaction evidence="12 14">
        <text>1,2-di-(9Z-octadecenoyl)-glycerol + H2O = (9Z-octadecenoyl)-glycerol + (9Z)-octadecenoate + H(+)</text>
        <dbReference type="Rhea" id="RHEA:38455"/>
        <dbReference type="ChEBI" id="CHEBI:15377"/>
        <dbReference type="ChEBI" id="CHEBI:15378"/>
        <dbReference type="ChEBI" id="CHEBI:30823"/>
        <dbReference type="ChEBI" id="CHEBI:52323"/>
        <dbReference type="ChEBI" id="CHEBI:75937"/>
    </reaction>
    <physiologicalReaction direction="left-to-right" evidence="21">
        <dbReference type="Rhea" id="RHEA:38456"/>
    </physiologicalReaction>
</comment>
<comment type="catalytic activity">
    <reaction evidence="13">
        <text>2-(5Z,8Z,11Z,14Z-eicosatetraenoyl)-glycerol + H2O = glycerol + (5Z,8Z,11Z,14Z)-eicosatetraenoate + H(+)</text>
        <dbReference type="Rhea" id="RHEA:26132"/>
        <dbReference type="ChEBI" id="CHEBI:15377"/>
        <dbReference type="ChEBI" id="CHEBI:15378"/>
        <dbReference type="ChEBI" id="CHEBI:17754"/>
        <dbReference type="ChEBI" id="CHEBI:32395"/>
        <dbReference type="ChEBI" id="CHEBI:52392"/>
    </reaction>
    <physiologicalReaction direction="left-to-right" evidence="22">
        <dbReference type="Rhea" id="RHEA:26133"/>
    </physiologicalReaction>
</comment>
<comment type="catalytic activity">
    <reaction evidence="13">
        <text>1-(9Z-octadecenoyl)-glycerol + H2O = glycerol + (9Z)-octadecenoate + H(+)</text>
        <dbReference type="Rhea" id="RHEA:38487"/>
        <dbReference type="ChEBI" id="CHEBI:15377"/>
        <dbReference type="ChEBI" id="CHEBI:15378"/>
        <dbReference type="ChEBI" id="CHEBI:17754"/>
        <dbReference type="ChEBI" id="CHEBI:30823"/>
        <dbReference type="ChEBI" id="CHEBI:75342"/>
    </reaction>
    <physiologicalReaction direction="left-to-right" evidence="22">
        <dbReference type="Rhea" id="RHEA:38488"/>
    </physiologicalReaction>
</comment>
<comment type="catalytic activity">
    <reaction evidence="13">
        <text>2-(9Z-octadecenoyl)-glycerol + H2O = glycerol + (9Z)-octadecenoate + H(+)</text>
        <dbReference type="Rhea" id="RHEA:38491"/>
        <dbReference type="ChEBI" id="CHEBI:15377"/>
        <dbReference type="ChEBI" id="CHEBI:15378"/>
        <dbReference type="ChEBI" id="CHEBI:17754"/>
        <dbReference type="ChEBI" id="CHEBI:30823"/>
        <dbReference type="ChEBI" id="CHEBI:73990"/>
    </reaction>
    <physiologicalReaction direction="left-to-right" evidence="22">
        <dbReference type="Rhea" id="RHEA:38492"/>
    </physiologicalReaction>
</comment>
<comment type="catalytic activity">
    <reaction evidence="12">
        <text>1-O-hexadecyl-2-acetyl-sn-glycerol + H2O = 1-O-hexadecyl-sn-glycerol + acetate + H(+)</text>
        <dbReference type="Rhea" id="RHEA:38563"/>
        <dbReference type="ChEBI" id="CHEBI:15377"/>
        <dbReference type="ChEBI" id="CHEBI:15378"/>
        <dbReference type="ChEBI" id="CHEBI:30089"/>
        <dbReference type="ChEBI" id="CHEBI:34115"/>
        <dbReference type="ChEBI" id="CHEBI:75936"/>
    </reaction>
    <physiologicalReaction direction="left-to-right" evidence="21">
        <dbReference type="Rhea" id="RHEA:38564"/>
    </physiologicalReaction>
</comment>
<comment type="catalytic activity">
    <reaction evidence="14">
        <text>1,2-di-(9Z-octadecenoyl)-sn-glycerol + H2O = (9Z-octadecenoyl)-glycerol + (9Z)-octadecenoate + H(+)</text>
        <dbReference type="Rhea" id="RHEA:39935"/>
        <dbReference type="ChEBI" id="CHEBI:15377"/>
        <dbReference type="ChEBI" id="CHEBI:15378"/>
        <dbReference type="ChEBI" id="CHEBI:30823"/>
        <dbReference type="ChEBI" id="CHEBI:52333"/>
        <dbReference type="ChEBI" id="CHEBI:75937"/>
    </reaction>
    <physiologicalReaction direction="left-to-right" evidence="23">
        <dbReference type="Rhea" id="RHEA:39936"/>
    </physiologicalReaction>
</comment>
<comment type="catalytic activity">
    <reaction evidence="14">
        <text>1,3-di-(9Z-octadecenoyl)-glycerol + H2O = 1-(9Z-octadecenoyl)-glycerol + (9Z)-octadecenoate + H(+)</text>
        <dbReference type="Rhea" id="RHEA:39939"/>
        <dbReference type="ChEBI" id="CHEBI:15377"/>
        <dbReference type="ChEBI" id="CHEBI:15378"/>
        <dbReference type="ChEBI" id="CHEBI:30823"/>
        <dbReference type="ChEBI" id="CHEBI:75342"/>
        <dbReference type="ChEBI" id="CHEBI:75735"/>
    </reaction>
    <physiologicalReaction direction="left-to-right" evidence="23">
        <dbReference type="Rhea" id="RHEA:39940"/>
    </physiologicalReaction>
</comment>
<comment type="catalytic activity">
    <reaction evidence="3">
        <text>1,2-di-(9Z-octadecenoyl)-glycerol + (9Z)-octadecenoate + H(+) = 1,2,3-tri-(9Z-octadecenoyl)-glycerol + H2O</text>
        <dbReference type="Rhea" id="RHEA:38379"/>
        <dbReference type="ChEBI" id="CHEBI:15377"/>
        <dbReference type="ChEBI" id="CHEBI:15378"/>
        <dbReference type="ChEBI" id="CHEBI:30823"/>
        <dbReference type="ChEBI" id="CHEBI:52323"/>
        <dbReference type="ChEBI" id="CHEBI:53753"/>
    </reaction>
    <physiologicalReaction direction="right-to-left" evidence="3">
        <dbReference type="Rhea" id="RHEA:38381"/>
    </physiologicalReaction>
</comment>
<comment type="catalytic activity">
    <reaction evidence="3">
        <text>2,3-di-(9Z)-octadecenoyl-sn-glycerol + H2O = 2-(9Z-octadecenoyl)-glycerol + (9Z)-octadecenoate + H(+)</text>
        <dbReference type="Rhea" id="RHEA:38383"/>
        <dbReference type="ChEBI" id="CHEBI:15377"/>
        <dbReference type="ChEBI" id="CHEBI:15378"/>
        <dbReference type="ChEBI" id="CHEBI:30823"/>
        <dbReference type="ChEBI" id="CHEBI:73990"/>
        <dbReference type="ChEBI" id="CHEBI:75824"/>
    </reaction>
    <physiologicalReaction direction="left-to-right" evidence="3">
        <dbReference type="Rhea" id="RHEA:38384"/>
    </physiologicalReaction>
</comment>
<comment type="catalytic activity">
    <reaction evidence="3">
        <text>1,2,3-tri-(9Z-octadecenoyl)-glycerol + H2O = di-(9Z)-octadecenoylglycerol + (9Z)-octadecenoate + H(+)</text>
        <dbReference type="Rhea" id="RHEA:38575"/>
        <dbReference type="ChEBI" id="CHEBI:15377"/>
        <dbReference type="ChEBI" id="CHEBI:15378"/>
        <dbReference type="ChEBI" id="CHEBI:30823"/>
        <dbReference type="ChEBI" id="CHEBI:53753"/>
        <dbReference type="ChEBI" id="CHEBI:75945"/>
    </reaction>
    <physiologicalReaction direction="left-to-right" evidence="3">
        <dbReference type="Rhea" id="RHEA:38576"/>
    </physiologicalReaction>
</comment>
<comment type="catalytic activity">
    <reaction evidence="1">
        <text>1,2-di-(9Z-octadecenoyl)-glycerol + H2O = 2-(9Z-octadecenoyl)-glycerol + (9Z)-octadecenoate + H(+)</text>
        <dbReference type="Rhea" id="RHEA:38659"/>
        <dbReference type="ChEBI" id="CHEBI:15377"/>
        <dbReference type="ChEBI" id="CHEBI:15378"/>
        <dbReference type="ChEBI" id="CHEBI:30823"/>
        <dbReference type="ChEBI" id="CHEBI:52323"/>
        <dbReference type="ChEBI" id="CHEBI:73990"/>
    </reaction>
    <physiologicalReaction direction="left-to-right" evidence="1">
        <dbReference type="Rhea" id="RHEA:38660"/>
    </physiologicalReaction>
</comment>
<comment type="biophysicochemical properties">
    <kinetics>
        <KM evidence="13">0.25 uM for 1-(9Z-octadecenoyl)-glycerol</KM>
        <KM evidence="13">0.26 uM for 2-(9Z-octadecenoyl)-glycerol</KM>
        <KM evidence="13">0.27 uM for 2-(5Z,8Z,11Z,14Z-eicosatetraenoyl)-glycerol</KM>
    </kinetics>
</comment>
<comment type="pathway">
    <text>Glycerolipid metabolism; triacylglycerol degradation.</text>
</comment>
<comment type="subunit">
    <text evidence="1 3 10">Monomer and homodimer (By similarity). Interacts with CAVIN1 in the adipocyte cytoplasm (By similarity). Interacts with PLIN5 (PubMed:19717842).</text>
</comment>
<comment type="subcellular location">
    <subcellularLocation>
        <location evidence="19">Cell membrane</location>
    </subcellularLocation>
    <subcellularLocation>
        <location evidence="3">Membrane</location>
        <location evidence="3">Caveola</location>
    </subcellularLocation>
    <subcellularLocation>
        <location evidence="8">Cytoplasm</location>
        <location evidence="8">Cytosol</location>
    </subcellularLocation>
    <subcellularLocation>
        <location evidence="9">Lipid droplet</location>
    </subcellularLocation>
    <text evidence="3 9">Found in the high-density caveolae (By similarity). Translocates to the cytoplasm from the caveolae upon insulin stimulation (By similarity). Phosphorylation by AMPK reduces its translocation towards the lipid droplets.</text>
</comment>
<comment type="alternative products">
    <event type="alternative splicing"/>
    <isoform>
        <id>P54310-1</id>
        <name>1</name>
        <sequence type="displayed"/>
    </isoform>
    <isoform>
        <id>P54310-2</id>
        <name>2</name>
        <sequence type="described" ref="VSP_053335"/>
    </isoform>
</comment>
<comment type="PTM">
    <text evidence="9 11">Phosphorylation by AMPK reduces its translocation towards the lipid droplets.</text>
</comment>
<comment type="disruption phenotype">
    <text evidence="14">Total acylglycerol levels are unaltered whereas diacylglycerol concentrations are drastically increased in white adipose tissue of knockout mice when compared to wild-type littermates.</text>
</comment>
<comment type="similarity">
    <text evidence="18">Belongs to the 'GDXG' lipolytic enzyme family.</text>
</comment>
<accession>P54310</accession>
<accession>P97866</accession>
<accession>Q3TE34</accession>
<accession>Q6GU16</accession>
<accession>Q8CDI9</accession>
<feature type="chain" id="PRO_0000071548" description="Hormone-sensitive lipase">
    <location>
        <begin position="1"/>
        <end position="759"/>
    </location>
</feature>
<feature type="region of interest" description="Disordered" evidence="7">
    <location>
        <begin position="534"/>
        <end position="553"/>
    </location>
</feature>
<feature type="region of interest" description="Disordered" evidence="7">
    <location>
        <begin position="583"/>
        <end position="604"/>
    </location>
</feature>
<feature type="short sequence motif" description="Involved in the stabilization of the negatively charged intermediate by the formation of the oxyanion hole" evidence="4">
    <location>
        <begin position="349"/>
        <end position="351"/>
    </location>
</feature>
<feature type="compositionally biased region" description="Polar residues" evidence="7">
    <location>
        <begin position="585"/>
        <end position="604"/>
    </location>
</feature>
<feature type="active site" evidence="5 6">
    <location>
        <position position="423"/>
    </location>
</feature>
<feature type="active site" evidence="5">
    <location>
        <position position="694"/>
    </location>
</feature>
<feature type="active site" evidence="5">
    <location>
        <position position="724"/>
    </location>
</feature>
<feature type="modified residue" description="Phosphoserine" evidence="2">
    <location>
        <position position="557"/>
    </location>
</feature>
<feature type="modified residue" description="Phosphoserine; by AMPK" evidence="20 24">
    <location>
        <position position="559"/>
    </location>
</feature>
<feature type="modified residue" description="Phosphothreonine" evidence="24">
    <location>
        <position position="574"/>
    </location>
</feature>
<feature type="modified residue" description="Phosphoserine" evidence="1">
    <location>
        <position position="597"/>
    </location>
</feature>
<feature type="modified residue" description="Phosphoserine" evidence="1">
    <location>
        <position position="618"/>
    </location>
</feature>
<feature type="modified residue" description="Phosphoserine" evidence="1">
    <location>
        <position position="650"/>
    </location>
</feature>
<feature type="modified residue" description="Phosphoserine" evidence="24">
    <location>
        <position position="651"/>
    </location>
</feature>
<feature type="splice variant" id="VSP_053335" description="In isoform 2." evidence="17">
    <original>M</original>
    <variation>MEPAVESAPVGAQASKQGKEGSKNRSRRRWRKGKIKASAFSHSM</variation>
    <location>
        <position position="1"/>
    </location>
</feature>
<feature type="sequence conflict" description="In Ref. 3; BAE41414." evidence="18" ref="3">
    <original>A</original>
    <variation>T</variation>
    <location>
        <position position="113"/>
    </location>
</feature>
<feature type="sequence conflict" description="In Ref. 3; BAE41414." evidence="18" ref="3">
    <original>E</original>
    <variation>D</variation>
    <location>
        <position position="311"/>
    </location>
</feature>
<feature type="sequence conflict" description="In Ref. 1; AAC52163." evidence="18" ref="1">
    <original>EL</original>
    <variation>DV</variation>
    <location>
        <begin position="330"/>
        <end position="331"/>
    </location>
</feature>
<feature type="sequence conflict" description="In Ref. 1; AAC52163." evidence="18" ref="1">
    <original>L</original>
    <variation>P</variation>
    <location>
        <position position="530"/>
    </location>
</feature>
<organism>
    <name type="scientific">Mus musculus</name>
    <name type="common">Mouse</name>
    <dbReference type="NCBI Taxonomy" id="10090"/>
    <lineage>
        <taxon>Eukaryota</taxon>
        <taxon>Metazoa</taxon>
        <taxon>Chordata</taxon>
        <taxon>Craniata</taxon>
        <taxon>Vertebrata</taxon>
        <taxon>Euteleostomi</taxon>
        <taxon>Mammalia</taxon>
        <taxon>Eutheria</taxon>
        <taxon>Euarchontoglires</taxon>
        <taxon>Glires</taxon>
        <taxon>Rodentia</taxon>
        <taxon>Myomorpha</taxon>
        <taxon>Muroidea</taxon>
        <taxon>Muridae</taxon>
        <taxon>Murinae</taxon>
        <taxon>Mus</taxon>
        <taxon>Mus</taxon>
    </lineage>
</organism>